<sequence>MANNKSAKKRAIQAEKRRQHNASRRSMMRTYMKKTVAAIAAGDKEAATAAFAVVTPILDRMATKGLIHKNKAARHKSRFAAQIKAL</sequence>
<name>RS20_VIBVU</name>
<proteinExistence type="inferred from homology"/>
<reference key="1">
    <citation type="submission" date="2002-12" db="EMBL/GenBank/DDBJ databases">
        <title>Complete genome sequence of Vibrio vulnificus CMCP6.</title>
        <authorList>
            <person name="Rhee J.H."/>
            <person name="Kim S.Y."/>
            <person name="Chung S.S."/>
            <person name="Kim J.J."/>
            <person name="Moon Y.H."/>
            <person name="Jeong H."/>
            <person name="Choy H.E."/>
        </authorList>
    </citation>
    <scope>NUCLEOTIDE SEQUENCE [LARGE SCALE GENOMIC DNA]</scope>
    <source>
        <strain>CMCP6</strain>
    </source>
</reference>
<comment type="function">
    <text evidence="1">Binds directly to 16S ribosomal RNA.</text>
</comment>
<comment type="similarity">
    <text evidence="1">Belongs to the bacterial ribosomal protein bS20 family.</text>
</comment>
<protein>
    <recommendedName>
        <fullName evidence="1">Small ribosomal subunit protein bS20</fullName>
    </recommendedName>
    <alternativeName>
        <fullName evidence="3">30S ribosomal protein S20</fullName>
    </alternativeName>
</protein>
<accession>Q8DES4</accession>
<organism>
    <name type="scientific">Vibrio vulnificus (strain CMCP6)</name>
    <dbReference type="NCBI Taxonomy" id="216895"/>
    <lineage>
        <taxon>Bacteria</taxon>
        <taxon>Pseudomonadati</taxon>
        <taxon>Pseudomonadota</taxon>
        <taxon>Gammaproteobacteria</taxon>
        <taxon>Vibrionales</taxon>
        <taxon>Vibrionaceae</taxon>
        <taxon>Vibrio</taxon>
    </lineage>
</organism>
<feature type="chain" id="PRO_0000168058" description="Small ribosomal subunit protein bS20">
    <location>
        <begin position="1"/>
        <end position="86"/>
    </location>
</feature>
<feature type="region of interest" description="Disordered" evidence="2">
    <location>
        <begin position="1"/>
        <end position="27"/>
    </location>
</feature>
<keyword id="KW-0687">Ribonucleoprotein</keyword>
<keyword id="KW-0689">Ribosomal protein</keyword>
<keyword id="KW-0694">RNA-binding</keyword>
<keyword id="KW-0699">rRNA-binding</keyword>
<dbReference type="EMBL" id="AE016795">
    <property type="protein sequence ID" value="AAO09029.1"/>
    <property type="molecule type" value="Genomic_DNA"/>
</dbReference>
<dbReference type="RefSeq" id="WP_011078599.1">
    <property type="nucleotide sequence ID" value="NC_004459.3"/>
</dbReference>
<dbReference type="SMR" id="Q8DES4"/>
<dbReference type="GeneID" id="93894806"/>
<dbReference type="KEGG" id="vvu:VV1_0511"/>
<dbReference type="HOGENOM" id="CLU_160655_4_0_6"/>
<dbReference type="Proteomes" id="UP000002275">
    <property type="component" value="Chromosome 1"/>
</dbReference>
<dbReference type="GO" id="GO:0005829">
    <property type="term" value="C:cytosol"/>
    <property type="evidence" value="ECO:0007669"/>
    <property type="project" value="TreeGrafter"/>
</dbReference>
<dbReference type="GO" id="GO:0015935">
    <property type="term" value="C:small ribosomal subunit"/>
    <property type="evidence" value="ECO:0007669"/>
    <property type="project" value="TreeGrafter"/>
</dbReference>
<dbReference type="GO" id="GO:0070181">
    <property type="term" value="F:small ribosomal subunit rRNA binding"/>
    <property type="evidence" value="ECO:0007669"/>
    <property type="project" value="TreeGrafter"/>
</dbReference>
<dbReference type="GO" id="GO:0003735">
    <property type="term" value="F:structural constituent of ribosome"/>
    <property type="evidence" value="ECO:0007669"/>
    <property type="project" value="InterPro"/>
</dbReference>
<dbReference type="GO" id="GO:0006412">
    <property type="term" value="P:translation"/>
    <property type="evidence" value="ECO:0007669"/>
    <property type="project" value="UniProtKB-UniRule"/>
</dbReference>
<dbReference type="FunFam" id="1.20.58.110:FF:000001">
    <property type="entry name" value="30S ribosomal protein S20"/>
    <property type="match status" value="1"/>
</dbReference>
<dbReference type="Gene3D" id="1.20.58.110">
    <property type="entry name" value="Ribosomal protein S20"/>
    <property type="match status" value="1"/>
</dbReference>
<dbReference type="HAMAP" id="MF_00500">
    <property type="entry name" value="Ribosomal_bS20"/>
    <property type="match status" value="1"/>
</dbReference>
<dbReference type="InterPro" id="IPR002583">
    <property type="entry name" value="Ribosomal_bS20"/>
</dbReference>
<dbReference type="InterPro" id="IPR036510">
    <property type="entry name" value="Ribosomal_bS20_sf"/>
</dbReference>
<dbReference type="NCBIfam" id="TIGR00029">
    <property type="entry name" value="S20"/>
    <property type="match status" value="1"/>
</dbReference>
<dbReference type="PANTHER" id="PTHR33398">
    <property type="entry name" value="30S RIBOSOMAL PROTEIN S20"/>
    <property type="match status" value="1"/>
</dbReference>
<dbReference type="PANTHER" id="PTHR33398:SF1">
    <property type="entry name" value="SMALL RIBOSOMAL SUBUNIT PROTEIN BS20C"/>
    <property type="match status" value="1"/>
</dbReference>
<dbReference type="Pfam" id="PF01649">
    <property type="entry name" value="Ribosomal_S20p"/>
    <property type="match status" value="1"/>
</dbReference>
<dbReference type="SUPFAM" id="SSF46992">
    <property type="entry name" value="Ribosomal protein S20"/>
    <property type="match status" value="1"/>
</dbReference>
<gene>
    <name evidence="1" type="primary">rpsT</name>
    <name type="ordered locus">VV1_0511</name>
</gene>
<evidence type="ECO:0000255" key="1">
    <source>
        <dbReference type="HAMAP-Rule" id="MF_00500"/>
    </source>
</evidence>
<evidence type="ECO:0000256" key="2">
    <source>
        <dbReference type="SAM" id="MobiDB-lite"/>
    </source>
</evidence>
<evidence type="ECO:0000305" key="3"/>